<keyword id="KW-0678">Repressor</keyword>
<keyword id="KW-0346">Stress response</keyword>
<keyword id="KW-0804">Transcription</keyword>
<keyword id="KW-0805">Transcription regulation</keyword>
<comment type="function">
    <text evidence="1">Negative regulator of class I heat shock genes (grpE-dnaK-dnaJ and groELS operons). Prevents heat-shock induction of these operons.</text>
</comment>
<comment type="similarity">
    <text evidence="1">Belongs to the HrcA family.</text>
</comment>
<sequence>MGTADERRFEVLRAIVADFVATHEPIGSKSLVERHNLGVSSATIRNDMAVLEAEGYIAQPHTSSGRVPTEKGYREFVDRLDDVKPLSMVERRAIQGFLESGVDLDDVLRRAVRLLAQLTRQVAVVQYPTLSTSKVRHLEVIALTPARLLVVVITDSGRVDQRIVELGDVIDDHQLSQLRELLGQALEGKKLAAASVAVADFAGQLSGAGGLGDAVGRSATVLLESLVEHTEERLLMGGTANLTRNAADFGGSLRSILEALEEQIVVLRLLAAQQEAGKVTVRIGHETEAEQIVGTSMVSTAYGSNDTVYGGMGVLGPTRMDYPGTIASVAAVALYIGEVLGAR</sequence>
<proteinExistence type="inferred from homology"/>
<name>HRCA_MYCUA</name>
<reference key="1">
    <citation type="journal article" date="2007" name="Genome Res.">
        <title>Reductive evolution and niche adaptation inferred from the genome of Mycobacterium ulcerans, the causative agent of Buruli ulcer.</title>
        <authorList>
            <person name="Stinear T.P."/>
            <person name="Seemann T."/>
            <person name="Pidot S."/>
            <person name="Frigui W."/>
            <person name="Reysset G."/>
            <person name="Garnier T."/>
            <person name="Meurice G."/>
            <person name="Simon D."/>
            <person name="Bouchier C."/>
            <person name="Ma L."/>
            <person name="Tichit M."/>
            <person name="Porter J.L."/>
            <person name="Ryan J."/>
            <person name="Johnson P.D.R."/>
            <person name="Davies J.K."/>
            <person name="Jenkin G.A."/>
            <person name="Small P.L.C."/>
            <person name="Jones L.M."/>
            <person name="Tekaia F."/>
            <person name="Laval F."/>
            <person name="Daffe M."/>
            <person name="Parkhill J."/>
            <person name="Cole S.T."/>
        </authorList>
    </citation>
    <scope>NUCLEOTIDE SEQUENCE [LARGE SCALE GENOMIC DNA]</scope>
    <source>
        <strain>Agy99</strain>
    </source>
</reference>
<protein>
    <recommendedName>
        <fullName evidence="1">Heat-inducible transcription repressor HrcA</fullName>
    </recommendedName>
</protein>
<evidence type="ECO:0000255" key="1">
    <source>
        <dbReference type="HAMAP-Rule" id="MF_00081"/>
    </source>
</evidence>
<dbReference type="EMBL" id="CP000325">
    <property type="protein sequence ID" value="ABL05761.1"/>
    <property type="molecule type" value="Genomic_DNA"/>
</dbReference>
<dbReference type="RefSeq" id="WP_011741366.1">
    <property type="nucleotide sequence ID" value="NC_008611.1"/>
</dbReference>
<dbReference type="SMR" id="A0PTU2"/>
<dbReference type="KEGG" id="mul:MUL_3627"/>
<dbReference type="eggNOG" id="COG1420">
    <property type="taxonomic scope" value="Bacteria"/>
</dbReference>
<dbReference type="HOGENOM" id="CLU_050019_2_0_11"/>
<dbReference type="Proteomes" id="UP000000765">
    <property type="component" value="Chromosome"/>
</dbReference>
<dbReference type="GO" id="GO:0003677">
    <property type="term" value="F:DNA binding"/>
    <property type="evidence" value="ECO:0007669"/>
    <property type="project" value="InterPro"/>
</dbReference>
<dbReference type="GO" id="GO:0045892">
    <property type="term" value="P:negative regulation of DNA-templated transcription"/>
    <property type="evidence" value="ECO:0007669"/>
    <property type="project" value="UniProtKB-UniRule"/>
</dbReference>
<dbReference type="FunFam" id="1.10.10.10:FF:000049">
    <property type="entry name" value="Heat-inducible transcription repressor HrcA"/>
    <property type="match status" value="1"/>
</dbReference>
<dbReference type="FunFam" id="3.30.390.60:FF:000003">
    <property type="entry name" value="Heat-inducible transcription repressor HrcA"/>
    <property type="match status" value="1"/>
</dbReference>
<dbReference type="Gene3D" id="3.30.450.40">
    <property type="match status" value="1"/>
</dbReference>
<dbReference type="Gene3D" id="3.30.390.60">
    <property type="entry name" value="Heat-inducible transcription repressor hrca homolog, domain 3"/>
    <property type="match status" value="1"/>
</dbReference>
<dbReference type="Gene3D" id="1.10.10.10">
    <property type="entry name" value="Winged helix-like DNA-binding domain superfamily/Winged helix DNA-binding domain"/>
    <property type="match status" value="1"/>
</dbReference>
<dbReference type="HAMAP" id="MF_00081">
    <property type="entry name" value="HrcA"/>
    <property type="match status" value="1"/>
</dbReference>
<dbReference type="InterPro" id="IPR029016">
    <property type="entry name" value="GAF-like_dom_sf"/>
</dbReference>
<dbReference type="InterPro" id="IPR002571">
    <property type="entry name" value="HrcA"/>
</dbReference>
<dbReference type="InterPro" id="IPR021153">
    <property type="entry name" value="HrcA_C"/>
</dbReference>
<dbReference type="InterPro" id="IPR036388">
    <property type="entry name" value="WH-like_DNA-bd_sf"/>
</dbReference>
<dbReference type="InterPro" id="IPR036390">
    <property type="entry name" value="WH_DNA-bd_sf"/>
</dbReference>
<dbReference type="InterPro" id="IPR023120">
    <property type="entry name" value="WHTH_transcript_rep_HrcA_IDD"/>
</dbReference>
<dbReference type="NCBIfam" id="TIGR00331">
    <property type="entry name" value="hrcA"/>
    <property type="match status" value="1"/>
</dbReference>
<dbReference type="PANTHER" id="PTHR34824">
    <property type="entry name" value="HEAT-INDUCIBLE TRANSCRIPTION REPRESSOR HRCA"/>
    <property type="match status" value="1"/>
</dbReference>
<dbReference type="PANTHER" id="PTHR34824:SF1">
    <property type="entry name" value="HEAT-INDUCIBLE TRANSCRIPTION REPRESSOR HRCA"/>
    <property type="match status" value="1"/>
</dbReference>
<dbReference type="Pfam" id="PF01628">
    <property type="entry name" value="HrcA"/>
    <property type="match status" value="1"/>
</dbReference>
<dbReference type="PIRSF" id="PIRSF005485">
    <property type="entry name" value="HrcA"/>
    <property type="match status" value="1"/>
</dbReference>
<dbReference type="SUPFAM" id="SSF55781">
    <property type="entry name" value="GAF domain-like"/>
    <property type="match status" value="1"/>
</dbReference>
<dbReference type="SUPFAM" id="SSF46785">
    <property type="entry name" value="Winged helix' DNA-binding domain"/>
    <property type="match status" value="1"/>
</dbReference>
<accession>A0PTU2</accession>
<gene>
    <name evidence="1" type="primary">hrcA</name>
    <name type="ordered locus">MUL_3627</name>
</gene>
<organism>
    <name type="scientific">Mycobacterium ulcerans (strain Agy99)</name>
    <dbReference type="NCBI Taxonomy" id="362242"/>
    <lineage>
        <taxon>Bacteria</taxon>
        <taxon>Bacillati</taxon>
        <taxon>Actinomycetota</taxon>
        <taxon>Actinomycetes</taxon>
        <taxon>Mycobacteriales</taxon>
        <taxon>Mycobacteriaceae</taxon>
        <taxon>Mycobacterium</taxon>
        <taxon>Mycobacterium ulcerans group</taxon>
    </lineage>
</organism>
<feature type="chain" id="PRO_1000010432" description="Heat-inducible transcription repressor HrcA">
    <location>
        <begin position="1"/>
        <end position="343"/>
    </location>
</feature>